<dbReference type="EMBL" id="AF321290">
    <property type="protein sequence ID" value="AAG46060.1"/>
    <property type="molecule type" value="mRNA"/>
</dbReference>
<dbReference type="EMBL" id="AE014297">
    <property type="protein sequence ID" value="AAF54535.1"/>
    <property type="molecule type" value="Genomic_DNA"/>
</dbReference>
<dbReference type="EMBL" id="AE014297">
    <property type="protein sequence ID" value="AAF54536.2"/>
    <property type="molecule type" value="Genomic_DNA"/>
</dbReference>
<dbReference type="EMBL" id="BT009971">
    <property type="protein sequence ID" value="AAQ22440.1"/>
    <property type="molecule type" value="mRNA"/>
</dbReference>
<dbReference type="EMBL" id="BT057983">
    <property type="protein sequence ID" value="ACM16693.1"/>
    <property type="molecule type" value="mRNA"/>
</dbReference>
<dbReference type="RefSeq" id="NP_001027171.1">
    <molecule id="Q9VGY6-1"/>
    <property type="nucleotide sequence ID" value="NM_001032000.2"/>
</dbReference>
<dbReference type="RefSeq" id="NP_001027172.1">
    <molecule id="Q9VGY6-2"/>
    <property type="nucleotide sequence ID" value="NM_001032001.2"/>
</dbReference>
<dbReference type="SMR" id="Q9VGY6"/>
<dbReference type="BioGRID" id="534156">
    <property type="interactions" value="1"/>
</dbReference>
<dbReference type="IntAct" id="Q9VGY6">
    <property type="interactions" value="1"/>
</dbReference>
<dbReference type="DNASU" id="3772559"/>
<dbReference type="EnsemblMetazoa" id="FBtr0305663">
    <molecule id="Q9VGY6-2"/>
    <property type="protein sequence ID" value="FBpp0296943"/>
    <property type="gene ID" value="FBgn0262717"/>
</dbReference>
<dbReference type="EnsemblMetazoa" id="FBtr0305664">
    <molecule id="Q9VGY6-1"/>
    <property type="protein sequence ID" value="FBpp0296944"/>
    <property type="gene ID" value="FBgn0262717"/>
</dbReference>
<dbReference type="GeneID" id="3772559"/>
<dbReference type="KEGG" id="dme:Dmel_CG43161"/>
<dbReference type="UCSC" id="CG14681-RA">
    <molecule id="Q9VGY6-1"/>
    <property type="organism name" value="d. melanogaster"/>
</dbReference>
<dbReference type="AGR" id="FB:FBgn0262717"/>
<dbReference type="CTD" id="3772559"/>
<dbReference type="FlyBase" id="FBgn0262717">
    <property type="gene designation" value="Skel"/>
</dbReference>
<dbReference type="VEuPathDB" id="VectorBase:FBgn0262717"/>
<dbReference type="HOGENOM" id="CLU_007940_0_0_1"/>
<dbReference type="OrthoDB" id="2448405at2759"/>
<dbReference type="PhylomeDB" id="Q9VGY6"/>
<dbReference type="BioGRID-ORCS" id="3772559">
    <property type="hits" value="0 hits in 1 CRISPR screen"/>
</dbReference>
<dbReference type="GenomeRNAi" id="3772559"/>
<dbReference type="Proteomes" id="UP000000803">
    <property type="component" value="Chromosome 3R"/>
</dbReference>
<dbReference type="Bgee" id="FBgn0262717">
    <property type="expression patterns" value="Expressed in capitellum (Drosophila) and 35 other cell types or tissues"/>
</dbReference>
<dbReference type="ExpressionAtlas" id="Q9VGY6">
    <property type="expression patterns" value="baseline and differential"/>
</dbReference>
<dbReference type="GO" id="GO:0005737">
    <property type="term" value="C:cytoplasm"/>
    <property type="evidence" value="ECO:0007669"/>
    <property type="project" value="UniProtKB-KW"/>
</dbReference>
<dbReference type="GO" id="GO:0005874">
    <property type="term" value="C:microtubule"/>
    <property type="evidence" value="ECO:0007669"/>
    <property type="project" value="UniProtKB-KW"/>
</dbReference>
<dbReference type="GO" id="GO:0005730">
    <property type="term" value="C:nucleolus"/>
    <property type="evidence" value="ECO:0007669"/>
    <property type="project" value="UniProtKB-SubCell"/>
</dbReference>
<dbReference type="GO" id="GO:0005634">
    <property type="term" value="C:nucleus"/>
    <property type="evidence" value="ECO:0000314"/>
    <property type="project" value="FlyBase"/>
</dbReference>
<dbReference type="GO" id="GO:0005700">
    <property type="term" value="C:polytene chromosome"/>
    <property type="evidence" value="ECO:0000314"/>
    <property type="project" value="FlyBase"/>
</dbReference>
<dbReference type="GO" id="GO:0005819">
    <property type="term" value="C:spindle"/>
    <property type="evidence" value="ECO:0007669"/>
    <property type="project" value="UniProtKB-SubCell"/>
</dbReference>
<dbReference type="GO" id="GO:0051301">
    <property type="term" value="P:cell division"/>
    <property type="evidence" value="ECO:0007669"/>
    <property type="project" value="UniProtKB-KW"/>
</dbReference>
<dbReference type="GO" id="GO:0051321">
    <property type="term" value="P:meiotic cell cycle"/>
    <property type="evidence" value="ECO:0007669"/>
    <property type="project" value="UniProtKB-KW"/>
</dbReference>
<dbReference type="GO" id="GO:0006997">
    <property type="term" value="P:nucleus organization"/>
    <property type="evidence" value="ECO:0000303"/>
    <property type="project" value="FlyBase"/>
</dbReference>
<dbReference type="GO" id="GO:0051225">
    <property type="term" value="P:spindle assembly"/>
    <property type="evidence" value="ECO:0000314"/>
    <property type="project" value="FlyBase"/>
</dbReference>
<dbReference type="CDD" id="cd09631">
    <property type="entry name" value="DOMON_DOH"/>
    <property type="match status" value="1"/>
</dbReference>
<dbReference type="InterPro" id="IPR019545">
    <property type="entry name" value="DM13_domain"/>
</dbReference>
<dbReference type="InterPro" id="IPR045266">
    <property type="entry name" value="DOH_DOMON"/>
</dbReference>
<dbReference type="InterPro" id="IPR005018">
    <property type="entry name" value="DOMON_domain"/>
</dbReference>
<dbReference type="InterPro" id="IPR052126">
    <property type="entry name" value="Spindle_Org/Thrombomodulin"/>
</dbReference>
<dbReference type="PANTHER" id="PTHR24036:SF13">
    <property type="entry name" value="PROTEIN SKELETOR, ISOFORMS D_E"/>
    <property type="match status" value="1"/>
</dbReference>
<dbReference type="PANTHER" id="PTHR24036">
    <property type="entry name" value="SKELETOR-RELATED"/>
    <property type="match status" value="1"/>
</dbReference>
<dbReference type="Pfam" id="PF25489">
    <property type="entry name" value="At5g54830"/>
    <property type="match status" value="1"/>
</dbReference>
<dbReference type="Pfam" id="PF10517">
    <property type="entry name" value="DM13"/>
    <property type="match status" value="2"/>
</dbReference>
<dbReference type="Pfam" id="PF03351">
    <property type="entry name" value="DOMON"/>
    <property type="match status" value="1"/>
</dbReference>
<dbReference type="SMART" id="SM00686">
    <property type="entry name" value="DM13"/>
    <property type="match status" value="2"/>
</dbReference>
<dbReference type="SMART" id="SM00664">
    <property type="entry name" value="DoH"/>
    <property type="match status" value="1"/>
</dbReference>
<dbReference type="PROSITE" id="PS51549">
    <property type="entry name" value="DM13"/>
    <property type="match status" value="2"/>
</dbReference>
<dbReference type="PROSITE" id="PS50836">
    <property type="entry name" value="DOMON"/>
    <property type="match status" value="1"/>
</dbReference>
<name>SKEL1_DROME</name>
<organism evidence="11">
    <name type="scientific">Drosophila melanogaster</name>
    <name type="common">Fruit fly</name>
    <dbReference type="NCBI Taxonomy" id="7227"/>
    <lineage>
        <taxon>Eukaryota</taxon>
        <taxon>Metazoa</taxon>
        <taxon>Ecdysozoa</taxon>
        <taxon>Arthropoda</taxon>
        <taxon>Hexapoda</taxon>
        <taxon>Insecta</taxon>
        <taxon>Pterygota</taxon>
        <taxon>Neoptera</taxon>
        <taxon>Endopterygota</taxon>
        <taxon>Diptera</taxon>
        <taxon>Brachycera</taxon>
        <taxon>Muscomorpha</taxon>
        <taxon>Ephydroidea</taxon>
        <taxon>Drosophilidae</taxon>
        <taxon>Drosophila</taxon>
        <taxon>Sophophora</taxon>
    </lineage>
</organism>
<gene>
    <name evidence="12" type="primary">Skel</name>
    <name evidence="12" type="ORF">CG43161</name>
</gene>
<evidence type="ECO:0000255" key="1"/>
<evidence type="ECO:0000255" key="2">
    <source>
        <dbReference type="PROSITE-ProRule" id="PRU00246"/>
    </source>
</evidence>
<evidence type="ECO:0000255" key="3">
    <source>
        <dbReference type="PROSITE-ProRule" id="PRU00882"/>
    </source>
</evidence>
<evidence type="ECO:0000256" key="4">
    <source>
        <dbReference type="SAM" id="MobiDB-lite"/>
    </source>
</evidence>
<evidence type="ECO:0000269" key="5">
    <source>
    </source>
</evidence>
<evidence type="ECO:0000269" key="6">
    <source>
    </source>
</evidence>
<evidence type="ECO:0000269" key="7">
    <source>
    </source>
</evidence>
<evidence type="ECO:0000269" key="8">
    <source>
    </source>
</evidence>
<evidence type="ECO:0000303" key="9">
    <source>
    </source>
</evidence>
<evidence type="ECO:0000305" key="10"/>
<evidence type="ECO:0000312" key="11">
    <source>
        <dbReference type="EMBL" id="AAF54536.2"/>
    </source>
</evidence>
<evidence type="ECO:0000312" key="12">
    <source>
        <dbReference type="FlyBase" id="FBgn0262717"/>
    </source>
</evidence>
<accession>Q9VGY6</accession>
<accession>B9EQQ8</accession>
<accession>Q7YU64</accession>
<accession>Q9VGY7</accession>
<proteinExistence type="evidence at protein level"/>
<comment type="function">
    <text evidence="6">Provides structural support to stabilize and organize the microtubule spindle during mitosis (within embryonic somatic cells) and meiosis (within spermatocytes). The role in mitosis regulation depends on the Ran pathway.</text>
</comment>
<comment type="subunit">
    <text evidence="7 8">Interacts with Chro and Mgtor as part of a macromolecular complex forming the spindle matrix. Chro colocalizes with Skeletor (Skel) on the chromosomes at interphase and on spindle during metaphase.</text>
</comment>
<comment type="subcellular location">
    <subcellularLocation>
        <location>Cytoplasm</location>
        <location>Cytoskeleton</location>
        <location>Spindle</location>
    </subcellularLocation>
    <subcellularLocation>
        <location>Nucleus</location>
        <location>Nucleolus</location>
    </subcellularLocation>
    <subcellularLocation>
        <location>Chromosome</location>
    </subcellularLocation>
    <text>Part of a macromolecular complex forming the spindle matrix. During mitosis, associated with chromatin at interphase, redistributes to the spindle structure at prophase (preceding the formation of the microtubule spindle) through to anaphase. Extends from one end of the spindle to the other during metaphase and anaphase, coaligns with the microtubule spindle.</text>
</comment>
<comment type="alternative products">
    <event type="alternative splicing"/>
    <isoform>
        <id>Q9VGY6-1</id>
        <name>C</name>
        <name evidence="6">ORF1b</name>
        <sequence type="displayed"/>
    </isoform>
    <isoform>
        <id>Q9VGY6-2</id>
        <name>B</name>
        <name evidence="6">ORF1a</name>
        <sequence type="described" ref="VSP_050746 VSP_050747"/>
    </isoform>
    <isoform>
        <id>Q9GPJ1-2</id>
        <name>D</name>
        <name>ORF2</name>
        <sequence type="external"/>
    </isoform>
    <isoform>
        <id>Q9GPJ1-1</id>
        <name>E</name>
        <sequence type="external"/>
    </isoform>
</comment>
<comment type="developmental stage">
    <text evidence="6">Isoform B is expressed during embryonic development.</text>
</comment>
<feature type="signal peptide" evidence="1">
    <location>
        <begin position="1"/>
        <end position="28"/>
    </location>
</feature>
<feature type="chain" id="PRO_0000021113" description="Protein Skeletor, isoforms B/C">
    <location>
        <begin position="29"/>
        <end position="784"/>
    </location>
</feature>
<feature type="domain" description="DM13 1" evidence="3">
    <location>
        <begin position="34"/>
        <end position="143"/>
    </location>
</feature>
<feature type="domain" description="DM13 2" evidence="3">
    <location>
        <begin position="151"/>
        <end position="258"/>
    </location>
</feature>
<feature type="domain" description="DOMON" evidence="2 10">
    <location>
        <begin position="287"/>
        <end position="419"/>
    </location>
</feature>
<feature type="region of interest" description="Disordered" evidence="4">
    <location>
        <begin position="451"/>
        <end position="491"/>
    </location>
</feature>
<feature type="splice variant" id="VSP_050746" description="In isoform B." evidence="9">
    <original>SKLNCEVLYDDLAF</original>
    <variation>VKKNASQILSELQR</variation>
    <location>
        <begin position="276"/>
        <end position="289"/>
    </location>
</feature>
<feature type="splice variant" id="VSP_050747" description="In isoform B." evidence="9">
    <location>
        <begin position="290"/>
        <end position="784"/>
    </location>
</feature>
<feature type="sequence conflict" description="In Ref. 4; AAQ22440." evidence="10" ref="4">
    <original>G</original>
    <variation>S</variation>
    <location>
        <position position="138"/>
    </location>
</feature>
<sequence>MLAMKDKPWLLLFGLLAALSCLASFGDAAYPYYGTKIGALTRLHHGVSGDVYAVDSRTIFIKKFNYDGEAPAAYFYVGNTARPSNEGAARLRDERGGTASLTRRYRNKDVTLSLPEGKTLRDIKWFSVWCDEFAVNFGDVSIPPNLDFPRPQKISALRGVHGVSSDNIVIVDAQTLLVPNFSYDGEAPDAKFWVGRGQRPTSDGLRIPDENGKENPLRRYERKTIVLTLPEDLTIFDIGHFGVWCEAFTVDFGHVRLPEGLNVPPSLKMLGISPQSKLNCEVLYDDLAFEVRWAVAGESIVVQLVAKLEPNHYMSFGISPNKNISQMIGADAVVAWVDPQTGNGFATDYFLEGKAQCSGGRGACPDTKISEKTNSIRLLNAAMVNGYSIVTYQRSLAATDRLDLPISITGAESVVWAIGPLNDYQEVSFHTFYNKHLHQIEFGRQPKWNCPLPEGARGNSNSSEQEDSAPAAQSSTGGAGYPPAGRPNVEPDEEFYENRAEALHRQPPQRRQETAIITQRRPVPTPKPVNSNGAWDIPAIQCHEPEDGVFYAQMGPTGGKHGYPAITGHVGWGISWYINGLLIPEIHVVRGKTYTFVVEGGNNPDIPAKYHPFYISDDPVGGYEHKREEEKKAVRIYAGVHRSRSGQVTPTGVGRLCNWTPDVEGPPADDYQSFGAYQRTLTLKCDAGEPGVITWKPDRNTPDTVYYHCFTHRYLGWKIHVHDSCDSEAGGLKGAASERHEIRLPAKATVAEPAPVHEDYAGEASVRHETKMASALLRLSRRAY</sequence>
<keyword id="KW-0025">Alternative splicing</keyword>
<keyword id="KW-0131">Cell cycle</keyword>
<keyword id="KW-0132">Cell division</keyword>
<keyword id="KW-0158">Chromosome</keyword>
<keyword id="KW-0963">Cytoplasm</keyword>
<keyword id="KW-0206">Cytoskeleton</keyword>
<keyword id="KW-0469">Meiosis</keyword>
<keyword id="KW-0493">Microtubule</keyword>
<keyword id="KW-0498">Mitosis</keyword>
<keyword id="KW-0539">Nucleus</keyword>
<keyword id="KW-1185">Reference proteome</keyword>
<keyword id="KW-0677">Repeat</keyword>
<keyword id="KW-0732">Signal</keyword>
<reference evidence="10" key="1">
    <citation type="journal article" date="2000" name="J. Cell Biol.">
        <title>Skeletor, a novel chromosomal protein that redistributes during mitosis provides evidence for the formation of a spindle matrix.</title>
        <authorList>
            <person name="Walker D.L."/>
            <person name="Wang D."/>
            <person name="Jin Y."/>
            <person name="Rath U."/>
            <person name="Wang Y."/>
            <person name="Johansen J."/>
            <person name="Johansen K.M."/>
        </authorList>
    </citation>
    <scope>NUCLEOTIDE SEQUENCE [MRNA] (ISOFORMS B AND C)</scope>
    <scope>FUNCTION</scope>
    <scope>SUBCELLULAR LOCATION</scope>
    <scope>DEVELOPMENTAL STAGE</scope>
    <source>
        <strain evidence="6">Canton-S</strain>
        <tissue evidence="6">Embryo</tissue>
    </source>
</reference>
<reference evidence="10" key="2">
    <citation type="journal article" date="2000" name="Science">
        <title>The genome sequence of Drosophila melanogaster.</title>
        <authorList>
            <person name="Adams M.D."/>
            <person name="Celniker S.E."/>
            <person name="Holt R.A."/>
            <person name="Evans C.A."/>
            <person name="Gocayne J.D."/>
            <person name="Amanatides P.G."/>
            <person name="Scherer S.E."/>
            <person name="Li P.W."/>
            <person name="Hoskins R.A."/>
            <person name="Galle R.F."/>
            <person name="George R.A."/>
            <person name="Lewis S.E."/>
            <person name="Richards S."/>
            <person name="Ashburner M."/>
            <person name="Henderson S.N."/>
            <person name="Sutton G.G."/>
            <person name="Wortman J.R."/>
            <person name="Yandell M.D."/>
            <person name="Zhang Q."/>
            <person name="Chen L.X."/>
            <person name="Brandon R.C."/>
            <person name="Rogers Y.-H.C."/>
            <person name="Blazej R.G."/>
            <person name="Champe M."/>
            <person name="Pfeiffer B.D."/>
            <person name="Wan K.H."/>
            <person name="Doyle C."/>
            <person name="Baxter E.G."/>
            <person name="Helt G."/>
            <person name="Nelson C.R."/>
            <person name="Miklos G.L.G."/>
            <person name="Abril J.F."/>
            <person name="Agbayani A."/>
            <person name="An H.-J."/>
            <person name="Andrews-Pfannkoch C."/>
            <person name="Baldwin D."/>
            <person name="Ballew R.M."/>
            <person name="Basu A."/>
            <person name="Baxendale J."/>
            <person name="Bayraktaroglu L."/>
            <person name="Beasley E.M."/>
            <person name="Beeson K.Y."/>
            <person name="Benos P.V."/>
            <person name="Berman B.P."/>
            <person name="Bhandari D."/>
            <person name="Bolshakov S."/>
            <person name="Borkova D."/>
            <person name="Botchan M.R."/>
            <person name="Bouck J."/>
            <person name="Brokstein P."/>
            <person name="Brottier P."/>
            <person name="Burtis K.C."/>
            <person name="Busam D.A."/>
            <person name="Butler H."/>
            <person name="Cadieu E."/>
            <person name="Center A."/>
            <person name="Chandra I."/>
            <person name="Cherry J.M."/>
            <person name="Cawley S."/>
            <person name="Dahlke C."/>
            <person name="Davenport L.B."/>
            <person name="Davies P."/>
            <person name="de Pablos B."/>
            <person name="Delcher A."/>
            <person name="Deng Z."/>
            <person name="Mays A.D."/>
            <person name="Dew I."/>
            <person name="Dietz S.M."/>
            <person name="Dodson K."/>
            <person name="Doup L.E."/>
            <person name="Downes M."/>
            <person name="Dugan-Rocha S."/>
            <person name="Dunkov B.C."/>
            <person name="Dunn P."/>
            <person name="Durbin K.J."/>
            <person name="Evangelista C.C."/>
            <person name="Ferraz C."/>
            <person name="Ferriera S."/>
            <person name="Fleischmann W."/>
            <person name="Fosler C."/>
            <person name="Gabrielian A.E."/>
            <person name="Garg N.S."/>
            <person name="Gelbart W.M."/>
            <person name="Glasser K."/>
            <person name="Glodek A."/>
            <person name="Gong F."/>
            <person name="Gorrell J.H."/>
            <person name="Gu Z."/>
            <person name="Guan P."/>
            <person name="Harris M."/>
            <person name="Harris N.L."/>
            <person name="Harvey D.A."/>
            <person name="Heiman T.J."/>
            <person name="Hernandez J.R."/>
            <person name="Houck J."/>
            <person name="Hostin D."/>
            <person name="Houston K.A."/>
            <person name="Howland T.J."/>
            <person name="Wei M.-H."/>
            <person name="Ibegwam C."/>
            <person name="Jalali M."/>
            <person name="Kalush F."/>
            <person name="Karpen G.H."/>
            <person name="Ke Z."/>
            <person name="Kennison J.A."/>
            <person name="Ketchum K.A."/>
            <person name="Kimmel B.E."/>
            <person name="Kodira C.D."/>
            <person name="Kraft C.L."/>
            <person name="Kravitz S."/>
            <person name="Kulp D."/>
            <person name="Lai Z."/>
            <person name="Lasko P."/>
            <person name="Lei Y."/>
            <person name="Levitsky A.A."/>
            <person name="Li J.H."/>
            <person name="Li Z."/>
            <person name="Liang Y."/>
            <person name="Lin X."/>
            <person name="Liu X."/>
            <person name="Mattei B."/>
            <person name="McIntosh T.C."/>
            <person name="McLeod M.P."/>
            <person name="McPherson D."/>
            <person name="Merkulov G."/>
            <person name="Milshina N.V."/>
            <person name="Mobarry C."/>
            <person name="Morris J."/>
            <person name="Moshrefi A."/>
            <person name="Mount S.M."/>
            <person name="Moy M."/>
            <person name="Murphy B."/>
            <person name="Murphy L."/>
            <person name="Muzny D.M."/>
            <person name="Nelson D.L."/>
            <person name="Nelson D.R."/>
            <person name="Nelson K.A."/>
            <person name="Nixon K."/>
            <person name="Nusskern D.R."/>
            <person name="Pacleb J.M."/>
            <person name="Palazzolo M."/>
            <person name="Pittman G.S."/>
            <person name="Pan S."/>
            <person name="Pollard J."/>
            <person name="Puri V."/>
            <person name="Reese M.G."/>
            <person name="Reinert K."/>
            <person name="Remington K."/>
            <person name="Saunders R.D.C."/>
            <person name="Scheeler F."/>
            <person name="Shen H."/>
            <person name="Shue B.C."/>
            <person name="Siden-Kiamos I."/>
            <person name="Simpson M."/>
            <person name="Skupski M.P."/>
            <person name="Smith T.J."/>
            <person name="Spier E."/>
            <person name="Spradling A.C."/>
            <person name="Stapleton M."/>
            <person name="Strong R."/>
            <person name="Sun E."/>
            <person name="Svirskas R."/>
            <person name="Tector C."/>
            <person name="Turner R."/>
            <person name="Venter E."/>
            <person name="Wang A.H."/>
            <person name="Wang X."/>
            <person name="Wang Z.-Y."/>
            <person name="Wassarman D.A."/>
            <person name="Weinstock G.M."/>
            <person name="Weissenbach J."/>
            <person name="Williams S.M."/>
            <person name="Woodage T."/>
            <person name="Worley K.C."/>
            <person name="Wu D."/>
            <person name="Yang S."/>
            <person name="Yao Q.A."/>
            <person name="Ye J."/>
            <person name="Yeh R.-F."/>
            <person name="Zaveri J.S."/>
            <person name="Zhan M."/>
            <person name="Zhang G."/>
            <person name="Zhao Q."/>
            <person name="Zheng L."/>
            <person name="Zheng X.H."/>
            <person name="Zhong F.N."/>
            <person name="Zhong W."/>
            <person name="Zhou X."/>
            <person name="Zhu S.C."/>
            <person name="Zhu X."/>
            <person name="Smith H.O."/>
            <person name="Gibbs R.A."/>
            <person name="Myers E.W."/>
            <person name="Rubin G.M."/>
            <person name="Venter J.C."/>
        </authorList>
    </citation>
    <scope>NUCLEOTIDE SEQUENCE [LARGE SCALE GENOMIC DNA]</scope>
    <source>
        <strain evidence="5">Berkeley</strain>
    </source>
</reference>
<reference evidence="10" key="3">
    <citation type="journal article" date="2002" name="Genome Biol.">
        <title>Annotation of the Drosophila melanogaster euchromatic genome: a systematic review.</title>
        <authorList>
            <person name="Misra S."/>
            <person name="Crosby M.A."/>
            <person name="Mungall C.J."/>
            <person name="Matthews B.B."/>
            <person name="Campbell K.S."/>
            <person name="Hradecky P."/>
            <person name="Huang Y."/>
            <person name="Kaminker J.S."/>
            <person name="Millburn G.H."/>
            <person name="Prochnik S.E."/>
            <person name="Smith C.D."/>
            <person name="Tupy J.L."/>
            <person name="Whitfield E.J."/>
            <person name="Bayraktaroglu L."/>
            <person name="Berman B.P."/>
            <person name="Bettencourt B.R."/>
            <person name="Celniker S.E."/>
            <person name="de Grey A.D.N.J."/>
            <person name="Drysdale R.A."/>
            <person name="Harris N.L."/>
            <person name="Richter J."/>
            <person name="Russo S."/>
            <person name="Schroeder A.J."/>
            <person name="Shu S.Q."/>
            <person name="Stapleton M."/>
            <person name="Yamada C."/>
            <person name="Ashburner M."/>
            <person name="Gelbart W.M."/>
            <person name="Rubin G.M."/>
            <person name="Lewis S.E."/>
        </authorList>
    </citation>
    <scope>GENOME REANNOTATION</scope>
    <scope>ALTERNATIVE SPLICING</scope>
    <source>
        <strain>Berkeley</strain>
    </source>
</reference>
<reference evidence="10" key="4">
    <citation type="submission" date="2009-01" db="EMBL/GenBank/DDBJ databases">
        <authorList>
            <person name="Stapleton M."/>
            <person name="Brokstein P."/>
            <person name="Hong L."/>
            <person name="Agbayani A."/>
            <person name="Carlson J.W."/>
            <person name="Booth B."/>
            <person name="Champe M."/>
            <person name="Chavez C."/>
            <person name="Dorsett V."/>
            <person name="Dresnek D."/>
            <person name="Farfan D."/>
            <person name="Frise E."/>
            <person name="George R.A."/>
            <person name="Gonzalez M."/>
            <person name="Guarin H."/>
            <person name="Kronmiller B."/>
            <person name="Li P.W."/>
            <person name="Liao G."/>
            <person name="Miranda A."/>
            <person name="Mungall C.J."/>
            <person name="Nunoo J."/>
            <person name="Pacleb J.M."/>
            <person name="Paragas V."/>
            <person name="Park S."/>
            <person name="Patel S."/>
            <person name="Phouanenavong S."/>
            <person name="Wan K.H."/>
            <person name="Yu C."/>
            <person name="Lewis S.E."/>
            <person name="Rubin G.M."/>
            <person name="Celniker S.E."/>
        </authorList>
    </citation>
    <scope>NUCLEOTIDE SEQUENCE [LARGE SCALE MRNA] (ISOFORM C)</scope>
    <source>
        <strain evidence="10">Berkeley</strain>
        <tissue evidence="10">Embryo</tissue>
    </source>
</reference>
<reference key="5">
    <citation type="journal article" date="2004" name="J. Cell. Biochem.">
        <title>Chromator, a novel and essential chromodomain protein interacts directly with the putative spindle matrix protein skeletor.</title>
        <authorList>
            <person name="Rath U."/>
            <person name="Wang D."/>
            <person name="Ding Y."/>
            <person name="Xu Y.Z."/>
            <person name="Qi H."/>
            <person name="Blacketer M.J."/>
            <person name="Girton J."/>
            <person name="Johansen J."/>
            <person name="Johansen K.M."/>
        </authorList>
    </citation>
    <scope>INTERACTION WITH CHRO</scope>
    <scope>SUBCELLULAR LOCATION</scope>
</reference>
<reference key="6">
    <citation type="journal article" date="2004" name="Mol. Biol. Cell">
        <title>Megator, an essential coiled-coil protein that localizes to the putative spindle matrix during mitosis in Drosophila.</title>
        <authorList>
            <person name="Qi H."/>
            <person name="Rath U."/>
            <person name="Wang D."/>
            <person name="Xu Y.Z."/>
            <person name="Ding Y."/>
            <person name="Zhang W."/>
            <person name="Blacketer M.J."/>
            <person name="Paddy M.R."/>
            <person name="Girton J."/>
            <person name="Johansen J."/>
            <person name="Johansen K.M."/>
        </authorList>
    </citation>
    <scope>INTERACTION WITH MGTOR</scope>
    <scope>SUBCELLULAR LOCATION</scope>
</reference>
<protein>
    <recommendedName>
        <fullName evidence="9">Protein Skeletor, isoforms B/C</fullName>
    </recommendedName>
</protein>